<proteinExistence type="inferred from homology"/>
<gene>
    <name evidence="1" type="primary">recA</name>
    <name type="ordered locus">P9301_17531</name>
</gene>
<reference key="1">
    <citation type="journal article" date="2007" name="PLoS Genet.">
        <title>Patterns and implications of gene gain and loss in the evolution of Prochlorococcus.</title>
        <authorList>
            <person name="Kettler G.C."/>
            <person name="Martiny A.C."/>
            <person name="Huang K."/>
            <person name="Zucker J."/>
            <person name="Coleman M.L."/>
            <person name="Rodrigue S."/>
            <person name="Chen F."/>
            <person name="Lapidus A."/>
            <person name="Ferriera S."/>
            <person name="Johnson J."/>
            <person name="Steglich C."/>
            <person name="Church G.M."/>
            <person name="Richardson P."/>
            <person name="Chisholm S.W."/>
        </authorList>
    </citation>
    <scope>NUCLEOTIDE SEQUENCE [LARGE SCALE GENOMIC DNA]</scope>
    <source>
        <strain>MIT 9301</strain>
    </source>
</reference>
<comment type="function">
    <text evidence="1">Can catalyze the hydrolysis of ATP in the presence of single-stranded DNA, the ATP-dependent uptake of single-stranded DNA by duplex DNA, and the ATP-dependent hybridization of homologous single-stranded DNAs. It interacts with LexA causing its activation and leading to its autocatalytic cleavage.</text>
</comment>
<comment type="subcellular location">
    <subcellularLocation>
        <location evidence="1">Cytoplasm</location>
    </subcellularLocation>
</comment>
<comment type="similarity">
    <text evidence="1">Belongs to the RecA family.</text>
</comment>
<keyword id="KW-0067">ATP-binding</keyword>
<keyword id="KW-0963">Cytoplasm</keyword>
<keyword id="KW-0227">DNA damage</keyword>
<keyword id="KW-0233">DNA recombination</keyword>
<keyword id="KW-0234">DNA repair</keyword>
<keyword id="KW-0238">DNA-binding</keyword>
<keyword id="KW-0547">Nucleotide-binding</keyword>
<keyword id="KW-1185">Reference proteome</keyword>
<keyword id="KW-0742">SOS response</keyword>
<protein>
    <recommendedName>
        <fullName evidence="1">Protein RecA</fullName>
    </recommendedName>
    <alternativeName>
        <fullName evidence="1">Recombinase A</fullName>
    </alternativeName>
</protein>
<name>RECA_PROM0</name>
<accession>A3PF51</accession>
<sequence length="365" mass="39430">MSLEEKKTTESKEKDKALSLVLGQIERNFGRGSIMRLGDASRMKVETISTGALTLDLALGGGYPKGRVVEVYGPESSGKTTLTLHAIAEVQKNGGVAAFVDAEHALDPVYAASLGVDVENLLVSQPDTGEMALEIVDQLIRSSAVDLVVVDSVAALTPRAEIEGEMGDHVIGSQARLMSQAMRKITGNIGKSGCTVIFLNQLRLKIGVTYGNPETTTGGNALKFYASVRLDIRRIQTLKRGTEEYGIRAKVKVAKNKVAPPFRIAEFDILFGKGISTTGCLLDLAEETNIIIRRGAWYSYEGENIGQGRDNTIIWLDQNLEIRNKVESMVKEKLTEGTEVSSNSMKALNSNPANTIAVNDIKTVA</sequence>
<organism>
    <name type="scientific">Prochlorococcus marinus (strain MIT 9301)</name>
    <dbReference type="NCBI Taxonomy" id="167546"/>
    <lineage>
        <taxon>Bacteria</taxon>
        <taxon>Bacillati</taxon>
        <taxon>Cyanobacteriota</taxon>
        <taxon>Cyanophyceae</taxon>
        <taxon>Synechococcales</taxon>
        <taxon>Prochlorococcaceae</taxon>
        <taxon>Prochlorococcus</taxon>
    </lineage>
</organism>
<evidence type="ECO:0000255" key="1">
    <source>
        <dbReference type="HAMAP-Rule" id="MF_00268"/>
    </source>
</evidence>
<feature type="chain" id="PRO_1000047959" description="Protein RecA">
    <location>
        <begin position="1"/>
        <end position="365"/>
    </location>
</feature>
<feature type="binding site" evidence="1">
    <location>
        <begin position="73"/>
        <end position="80"/>
    </location>
    <ligand>
        <name>ATP</name>
        <dbReference type="ChEBI" id="CHEBI:30616"/>
    </ligand>
</feature>
<dbReference type="EMBL" id="CP000576">
    <property type="protein sequence ID" value="ABO18376.1"/>
    <property type="molecule type" value="Genomic_DNA"/>
</dbReference>
<dbReference type="RefSeq" id="WP_011863664.1">
    <property type="nucleotide sequence ID" value="NC_009091.1"/>
</dbReference>
<dbReference type="SMR" id="A3PF51"/>
<dbReference type="STRING" id="167546.P9301_17531"/>
<dbReference type="KEGG" id="pmg:P9301_17531"/>
<dbReference type="eggNOG" id="COG0468">
    <property type="taxonomic scope" value="Bacteria"/>
</dbReference>
<dbReference type="HOGENOM" id="CLU_040469_3_2_3"/>
<dbReference type="OrthoDB" id="9776733at2"/>
<dbReference type="Proteomes" id="UP000001430">
    <property type="component" value="Chromosome"/>
</dbReference>
<dbReference type="GO" id="GO:0005829">
    <property type="term" value="C:cytosol"/>
    <property type="evidence" value="ECO:0007669"/>
    <property type="project" value="TreeGrafter"/>
</dbReference>
<dbReference type="GO" id="GO:0005524">
    <property type="term" value="F:ATP binding"/>
    <property type="evidence" value="ECO:0007669"/>
    <property type="project" value="UniProtKB-UniRule"/>
</dbReference>
<dbReference type="GO" id="GO:0016887">
    <property type="term" value="F:ATP hydrolysis activity"/>
    <property type="evidence" value="ECO:0007669"/>
    <property type="project" value="InterPro"/>
</dbReference>
<dbReference type="GO" id="GO:0140664">
    <property type="term" value="F:ATP-dependent DNA damage sensor activity"/>
    <property type="evidence" value="ECO:0007669"/>
    <property type="project" value="InterPro"/>
</dbReference>
<dbReference type="GO" id="GO:0003684">
    <property type="term" value="F:damaged DNA binding"/>
    <property type="evidence" value="ECO:0007669"/>
    <property type="project" value="UniProtKB-UniRule"/>
</dbReference>
<dbReference type="GO" id="GO:0003697">
    <property type="term" value="F:single-stranded DNA binding"/>
    <property type="evidence" value="ECO:0007669"/>
    <property type="project" value="UniProtKB-UniRule"/>
</dbReference>
<dbReference type="GO" id="GO:0006310">
    <property type="term" value="P:DNA recombination"/>
    <property type="evidence" value="ECO:0007669"/>
    <property type="project" value="UniProtKB-UniRule"/>
</dbReference>
<dbReference type="GO" id="GO:0006281">
    <property type="term" value="P:DNA repair"/>
    <property type="evidence" value="ECO:0007669"/>
    <property type="project" value="UniProtKB-UniRule"/>
</dbReference>
<dbReference type="GO" id="GO:0009432">
    <property type="term" value="P:SOS response"/>
    <property type="evidence" value="ECO:0007669"/>
    <property type="project" value="UniProtKB-UniRule"/>
</dbReference>
<dbReference type="CDD" id="cd00983">
    <property type="entry name" value="RecA"/>
    <property type="match status" value="1"/>
</dbReference>
<dbReference type="FunFam" id="3.40.50.300:FF:000087">
    <property type="entry name" value="Recombinase RecA"/>
    <property type="match status" value="1"/>
</dbReference>
<dbReference type="Gene3D" id="3.40.50.300">
    <property type="entry name" value="P-loop containing nucleotide triphosphate hydrolases"/>
    <property type="match status" value="1"/>
</dbReference>
<dbReference type="HAMAP" id="MF_00268">
    <property type="entry name" value="RecA"/>
    <property type="match status" value="1"/>
</dbReference>
<dbReference type="InterPro" id="IPR003593">
    <property type="entry name" value="AAA+_ATPase"/>
</dbReference>
<dbReference type="InterPro" id="IPR013765">
    <property type="entry name" value="DNA_recomb/repair_RecA"/>
</dbReference>
<dbReference type="InterPro" id="IPR020584">
    <property type="entry name" value="DNA_recomb/repair_RecA_CS"/>
</dbReference>
<dbReference type="InterPro" id="IPR027417">
    <property type="entry name" value="P-loop_NTPase"/>
</dbReference>
<dbReference type="InterPro" id="IPR049261">
    <property type="entry name" value="RecA-like_C"/>
</dbReference>
<dbReference type="InterPro" id="IPR049428">
    <property type="entry name" value="RecA-like_N"/>
</dbReference>
<dbReference type="InterPro" id="IPR020588">
    <property type="entry name" value="RecA_ATP-bd"/>
</dbReference>
<dbReference type="InterPro" id="IPR023400">
    <property type="entry name" value="RecA_C_sf"/>
</dbReference>
<dbReference type="InterPro" id="IPR020587">
    <property type="entry name" value="RecA_monomer-monomer_interface"/>
</dbReference>
<dbReference type="NCBIfam" id="TIGR02012">
    <property type="entry name" value="tigrfam_recA"/>
    <property type="match status" value="1"/>
</dbReference>
<dbReference type="PANTHER" id="PTHR45900:SF1">
    <property type="entry name" value="MITOCHONDRIAL DNA REPAIR PROTEIN RECA HOMOLOG-RELATED"/>
    <property type="match status" value="1"/>
</dbReference>
<dbReference type="PANTHER" id="PTHR45900">
    <property type="entry name" value="RECA"/>
    <property type="match status" value="1"/>
</dbReference>
<dbReference type="Pfam" id="PF00154">
    <property type="entry name" value="RecA"/>
    <property type="match status" value="1"/>
</dbReference>
<dbReference type="Pfam" id="PF21096">
    <property type="entry name" value="RecA_C"/>
    <property type="match status" value="1"/>
</dbReference>
<dbReference type="PRINTS" id="PR00142">
    <property type="entry name" value="RECA"/>
</dbReference>
<dbReference type="SMART" id="SM00382">
    <property type="entry name" value="AAA"/>
    <property type="match status" value="1"/>
</dbReference>
<dbReference type="SUPFAM" id="SSF52540">
    <property type="entry name" value="P-loop containing nucleoside triphosphate hydrolases"/>
    <property type="match status" value="1"/>
</dbReference>
<dbReference type="SUPFAM" id="SSF54752">
    <property type="entry name" value="RecA protein, C-terminal domain"/>
    <property type="match status" value="1"/>
</dbReference>
<dbReference type="PROSITE" id="PS00321">
    <property type="entry name" value="RECA_1"/>
    <property type="match status" value="1"/>
</dbReference>
<dbReference type="PROSITE" id="PS50162">
    <property type="entry name" value="RECA_2"/>
    <property type="match status" value="1"/>
</dbReference>
<dbReference type="PROSITE" id="PS50163">
    <property type="entry name" value="RECA_3"/>
    <property type="match status" value="1"/>
</dbReference>